<sequence>MALTNADRAEIIAKFARAENDTGSPEVQVALLTAQINDLQGHFKAHKHDHHSRRGLIRMVNQRRKLLDYLNGKDHERYTALIGALGLRR</sequence>
<proteinExistence type="inferred from homology"/>
<accession>B0VLR8</accession>
<comment type="function">
    <text evidence="1">One of the primary rRNA binding proteins, it binds directly to 16S rRNA where it helps nucleate assembly of the platform of the 30S subunit by binding and bridging several RNA helices of the 16S rRNA.</text>
</comment>
<comment type="function">
    <text evidence="1">Forms an intersubunit bridge (bridge B4) with the 23S rRNA of the 50S subunit in the ribosome.</text>
</comment>
<comment type="subunit">
    <text evidence="1">Part of the 30S ribosomal subunit. Forms a bridge to the 50S subunit in the 70S ribosome, contacting the 23S rRNA.</text>
</comment>
<comment type="similarity">
    <text evidence="1">Belongs to the universal ribosomal protein uS15 family.</text>
</comment>
<protein>
    <recommendedName>
        <fullName evidence="1">Small ribosomal subunit protein uS15</fullName>
    </recommendedName>
    <alternativeName>
        <fullName evidence="2">30S ribosomal protein S15</fullName>
    </alternativeName>
</protein>
<evidence type="ECO:0000255" key="1">
    <source>
        <dbReference type="HAMAP-Rule" id="MF_01343"/>
    </source>
</evidence>
<evidence type="ECO:0000305" key="2"/>
<name>RS15_ACIBS</name>
<dbReference type="EMBL" id="CU468230">
    <property type="protein sequence ID" value="CAP02434.1"/>
    <property type="molecule type" value="Genomic_DNA"/>
</dbReference>
<dbReference type="SMR" id="B0VLR8"/>
<dbReference type="KEGG" id="abm:ABSDF3155"/>
<dbReference type="HOGENOM" id="CLU_148518_0_0_6"/>
<dbReference type="Proteomes" id="UP000001741">
    <property type="component" value="Chromosome"/>
</dbReference>
<dbReference type="GO" id="GO:0022627">
    <property type="term" value="C:cytosolic small ribosomal subunit"/>
    <property type="evidence" value="ECO:0007669"/>
    <property type="project" value="TreeGrafter"/>
</dbReference>
<dbReference type="GO" id="GO:0019843">
    <property type="term" value="F:rRNA binding"/>
    <property type="evidence" value="ECO:0007669"/>
    <property type="project" value="UniProtKB-UniRule"/>
</dbReference>
<dbReference type="GO" id="GO:0003735">
    <property type="term" value="F:structural constituent of ribosome"/>
    <property type="evidence" value="ECO:0007669"/>
    <property type="project" value="InterPro"/>
</dbReference>
<dbReference type="GO" id="GO:0006412">
    <property type="term" value="P:translation"/>
    <property type="evidence" value="ECO:0007669"/>
    <property type="project" value="UniProtKB-UniRule"/>
</dbReference>
<dbReference type="CDD" id="cd00353">
    <property type="entry name" value="Ribosomal_S15p_S13e"/>
    <property type="match status" value="1"/>
</dbReference>
<dbReference type="FunFam" id="1.10.287.10:FF:000002">
    <property type="entry name" value="30S ribosomal protein S15"/>
    <property type="match status" value="1"/>
</dbReference>
<dbReference type="Gene3D" id="6.10.250.3130">
    <property type="match status" value="1"/>
</dbReference>
<dbReference type="Gene3D" id="1.10.287.10">
    <property type="entry name" value="S15/NS1, RNA-binding"/>
    <property type="match status" value="1"/>
</dbReference>
<dbReference type="HAMAP" id="MF_01343_B">
    <property type="entry name" value="Ribosomal_uS15_B"/>
    <property type="match status" value="1"/>
</dbReference>
<dbReference type="InterPro" id="IPR000589">
    <property type="entry name" value="Ribosomal_uS15"/>
</dbReference>
<dbReference type="InterPro" id="IPR005290">
    <property type="entry name" value="Ribosomal_uS15_bac-type"/>
</dbReference>
<dbReference type="InterPro" id="IPR009068">
    <property type="entry name" value="uS15_NS1_RNA-bd_sf"/>
</dbReference>
<dbReference type="NCBIfam" id="TIGR00952">
    <property type="entry name" value="S15_bact"/>
    <property type="match status" value="1"/>
</dbReference>
<dbReference type="PANTHER" id="PTHR23321">
    <property type="entry name" value="RIBOSOMAL PROTEIN S15, BACTERIAL AND ORGANELLAR"/>
    <property type="match status" value="1"/>
</dbReference>
<dbReference type="PANTHER" id="PTHR23321:SF26">
    <property type="entry name" value="SMALL RIBOSOMAL SUBUNIT PROTEIN US15M"/>
    <property type="match status" value="1"/>
</dbReference>
<dbReference type="Pfam" id="PF00312">
    <property type="entry name" value="Ribosomal_S15"/>
    <property type="match status" value="1"/>
</dbReference>
<dbReference type="SMART" id="SM01387">
    <property type="entry name" value="Ribosomal_S15"/>
    <property type="match status" value="1"/>
</dbReference>
<dbReference type="SUPFAM" id="SSF47060">
    <property type="entry name" value="S15/NS1 RNA-binding domain"/>
    <property type="match status" value="1"/>
</dbReference>
<dbReference type="PROSITE" id="PS00362">
    <property type="entry name" value="RIBOSOMAL_S15"/>
    <property type="match status" value="1"/>
</dbReference>
<organism>
    <name type="scientific">Acinetobacter baumannii (strain SDF)</name>
    <dbReference type="NCBI Taxonomy" id="509170"/>
    <lineage>
        <taxon>Bacteria</taxon>
        <taxon>Pseudomonadati</taxon>
        <taxon>Pseudomonadota</taxon>
        <taxon>Gammaproteobacteria</taxon>
        <taxon>Moraxellales</taxon>
        <taxon>Moraxellaceae</taxon>
        <taxon>Acinetobacter</taxon>
        <taxon>Acinetobacter calcoaceticus/baumannii complex</taxon>
    </lineage>
</organism>
<keyword id="KW-0687">Ribonucleoprotein</keyword>
<keyword id="KW-0689">Ribosomal protein</keyword>
<keyword id="KW-0694">RNA-binding</keyword>
<keyword id="KW-0699">rRNA-binding</keyword>
<reference key="1">
    <citation type="journal article" date="2008" name="PLoS ONE">
        <title>Comparative analysis of Acinetobacters: three genomes for three lifestyles.</title>
        <authorList>
            <person name="Vallenet D."/>
            <person name="Nordmann P."/>
            <person name="Barbe V."/>
            <person name="Poirel L."/>
            <person name="Mangenot S."/>
            <person name="Bataille E."/>
            <person name="Dossat C."/>
            <person name="Gas S."/>
            <person name="Kreimeyer A."/>
            <person name="Lenoble P."/>
            <person name="Oztas S."/>
            <person name="Poulain J."/>
            <person name="Segurens B."/>
            <person name="Robert C."/>
            <person name="Abergel C."/>
            <person name="Claverie J.-M."/>
            <person name="Raoult D."/>
            <person name="Medigue C."/>
            <person name="Weissenbach J."/>
            <person name="Cruveiller S."/>
        </authorList>
    </citation>
    <scope>NUCLEOTIDE SEQUENCE [LARGE SCALE GENOMIC DNA]</scope>
    <source>
        <strain>SDF</strain>
    </source>
</reference>
<gene>
    <name evidence="1" type="primary">rpsO</name>
    <name type="ordered locus">ABSDF3155</name>
</gene>
<feature type="chain" id="PRO_1000143061" description="Small ribosomal subunit protein uS15">
    <location>
        <begin position="1"/>
        <end position="89"/>
    </location>
</feature>